<evidence type="ECO:0000255" key="1">
    <source>
        <dbReference type="HAMAP-Rule" id="MF_00021"/>
    </source>
</evidence>
<sequence>MKPIIYIKYGELTLKGKNRAQFIKVLVHNIKQMLLEYHELVYQVGYDNLKIINLEKYNLQQVINDLQQVYGIAFICVAYQVNKEINEIQLACNKLVNNTDQTFKIEARRNDKSFIYDSMQIKQICATYLLQNQPTLKVDVHHPQLLINIEIKHDCAIVYGHKIPGAKGLPVGINGKALVLLSGGIDSPVASRLIMKRGISVDFITFITPPHTSQKALDKTIALAKQITLNNHLTKANLYVCNFTKLQEEIAHISKESYRITLMRRYFMRIAKRLAIDIKAGALVTGEALGQVASQTLNSMQTISSVLNDFLVLRPLITYDKQEIISLAKQFNTYELSILPYDDSCSLFAPKNPTTNPNVQTAMKLEQESLVLDAIYELVFTKEITKINLSSK</sequence>
<keyword id="KW-0067">ATP-binding</keyword>
<keyword id="KW-0963">Cytoplasm</keyword>
<keyword id="KW-0547">Nucleotide-binding</keyword>
<keyword id="KW-0694">RNA-binding</keyword>
<keyword id="KW-0784">Thiamine biosynthesis</keyword>
<keyword id="KW-0808">Transferase</keyword>
<keyword id="KW-0820">tRNA-binding</keyword>
<protein>
    <recommendedName>
        <fullName evidence="1">Probable tRNA sulfurtransferase</fullName>
        <ecNumber evidence="1">2.8.1.4</ecNumber>
    </recommendedName>
    <alternativeName>
        <fullName evidence="1">Sulfur carrier protein ThiS sulfurtransferase</fullName>
    </alternativeName>
    <alternativeName>
        <fullName evidence="1">Thiamine biosynthesis protein ThiI</fullName>
    </alternativeName>
    <alternativeName>
        <fullName evidence="1">tRNA 4-thiouridine synthase</fullName>
    </alternativeName>
</protein>
<proteinExistence type="inferred from homology"/>
<dbReference type="EC" id="2.8.1.4" evidence="1"/>
<dbReference type="EMBL" id="CP001184">
    <property type="protein sequence ID" value="ACI60105.1"/>
    <property type="molecule type" value="Genomic_DNA"/>
</dbReference>
<dbReference type="RefSeq" id="WP_004025624.1">
    <property type="nucleotide sequence ID" value="NC_011374.1"/>
</dbReference>
<dbReference type="SMR" id="B5ZBR5"/>
<dbReference type="STRING" id="565575.UUR10_0463"/>
<dbReference type="GeneID" id="93848935"/>
<dbReference type="KEGG" id="uue:UUR10_0463"/>
<dbReference type="eggNOG" id="COG0301">
    <property type="taxonomic scope" value="Bacteria"/>
</dbReference>
<dbReference type="HOGENOM" id="CLU_037952_4_0_14"/>
<dbReference type="OrthoDB" id="9773948at2"/>
<dbReference type="UniPathway" id="UPA00060"/>
<dbReference type="Proteomes" id="UP000002018">
    <property type="component" value="Chromosome"/>
</dbReference>
<dbReference type="GO" id="GO:0005829">
    <property type="term" value="C:cytosol"/>
    <property type="evidence" value="ECO:0007669"/>
    <property type="project" value="TreeGrafter"/>
</dbReference>
<dbReference type="GO" id="GO:0005524">
    <property type="term" value="F:ATP binding"/>
    <property type="evidence" value="ECO:0007669"/>
    <property type="project" value="UniProtKB-UniRule"/>
</dbReference>
<dbReference type="GO" id="GO:0004810">
    <property type="term" value="F:CCA tRNA nucleotidyltransferase activity"/>
    <property type="evidence" value="ECO:0007669"/>
    <property type="project" value="InterPro"/>
</dbReference>
<dbReference type="GO" id="GO:0000049">
    <property type="term" value="F:tRNA binding"/>
    <property type="evidence" value="ECO:0007669"/>
    <property type="project" value="UniProtKB-UniRule"/>
</dbReference>
<dbReference type="GO" id="GO:0140741">
    <property type="term" value="F:tRNA-uracil-4 sulfurtransferase activity"/>
    <property type="evidence" value="ECO:0007669"/>
    <property type="project" value="UniProtKB-EC"/>
</dbReference>
<dbReference type="GO" id="GO:0009228">
    <property type="term" value="P:thiamine biosynthetic process"/>
    <property type="evidence" value="ECO:0007669"/>
    <property type="project" value="UniProtKB-KW"/>
</dbReference>
<dbReference type="GO" id="GO:0009229">
    <property type="term" value="P:thiamine diphosphate biosynthetic process"/>
    <property type="evidence" value="ECO:0007669"/>
    <property type="project" value="UniProtKB-UniRule"/>
</dbReference>
<dbReference type="GO" id="GO:0052837">
    <property type="term" value="P:thiazole biosynthetic process"/>
    <property type="evidence" value="ECO:0007669"/>
    <property type="project" value="TreeGrafter"/>
</dbReference>
<dbReference type="GO" id="GO:0002937">
    <property type="term" value="P:tRNA 4-thiouridine biosynthesis"/>
    <property type="evidence" value="ECO:0007669"/>
    <property type="project" value="TreeGrafter"/>
</dbReference>
<dbReference type="CDD" id="cd01712">
    <property type="entry name" value="PPase_ThiI"/>
    <property type="match status" value="1"/>
</dbReference>
<dbReference type="CDD" id="cd11716">
    <property type="entry name" value="THUMP_ThiI"/>
    <property type="match status" value="1"/>
</dbReference>
<dbReference type="FunFam" id="3.40.50.620:FF:000053">
    <property type="entry name" value="Probable tRNA sulfurtransferase"/>
    <property type="match status" value="1"/>
</dbReference>
<dbReference type="Gene3D" id="3.30.2130.30">
    <property type="match status" value="1"/>
</dbReference>
<dbReference type="Gene3D" id="3.40.50.620">
    <property type="entry name" value="HUPs"/>
    <property type="match status" value="1"/>
</dbReference>
<dbReference type="HAMAP" id="MF_00021">
    <property type="entry name" value="ThiI"/>
    <property type="match status" value="1"/>
</dbReference>
<dbReference type="InterPro" id="IPR014729">
    <property type="entry name" value="Rossmann-like_a/b/a_fold"/>
</dbReference>
<dbReference type="InterPro" id="IPR020536">
    <property type="entry name" value="ThiI_AANH"/>
</dbReference>
<dbReference type="InterPro" id="IPR054173">
    <property type="entry name" value="ThiI_fer"/>
</dbReference>
<dbReference type="InterPro" id="IPR049961">
    <property type="entry name" value="ThiI_N"/>
</dbReference>
<dbReference type="InterPro" id="IPR004114">
    <property type="entry name" value="THUMP_dom"/>
</dbReference>
<dbReference type="InterPro" id="IPR049962">
    <property type="entry name" value="THUMP_ThiI"/>
</dbReference>
<dbReference type="InterPro" id="IPR003720">
    <property type="entry name" value="tRNA_STrfase"/>
</dbReference>
<dbReference type="InterPro" id="IPR050102">
    <property type="entry name" value="tRNA_sulfurtransferase_ThiI"/>
</dbReference>
<dbReference type="NCBIfam" id="TIGR00342">
    <property type="entry name" value="tRNA uracil 4-sulfurtransferase ThiI"/>
    <property type="match status" value="1"/>
</dbReference>
<dbReference type="PANTHER" id="PTHR43209">
    <property type="entry name" value="TRNA SULFURTRANSFERASE"/>
    <property type="match status" value="1"/>
</dbReference>
<dbReference type="PANTHER" id="PTHR43209:SF1">
    <property type="entry name" value="TRNA SULFURTRANSFERASE"/>
    <property type="match status" value="1"/>
</dbReference>
<dbReference type="Pfam" id="PF02568">
    <property type="entry name" value="ThiI"/>
    <property type="match status" value="1"/>
</dbReference>
<dbReference type="Pfam" id="PF22025">
    <property type="entry name" value="ThiI_fer"/>
    <property type="match status" value="1"/>
</dbReference>
<dbReference type="Pfam" id="PF02926">
    <property type="entry name" value="THUMP"/>
    <property type="match status" value="1"/>
</dbReference>
<dbReference type="SMART" id="SM00981">
    <property type="entry name" value="THUMP"/>
    <property type="match status" value="1"/>
</dbReference>
<dbReference type="SUPFAM" id="SSF52402">
    <property type="entry name" value="Adenine nucleotide alpha hydrolases-like"/>
    <property type="match status" value="1"/>
</dbReference>
<dbReference type="SUPFAM" id="SSF143437">
    <property type="entry name" value="THUMP domain-like"/>
    <property type="match status" value="1"/>
</dbReference>
<dbReference type="PROSITE" id="PS51165">
    <property type="entry name" value="THUMP"/>
    <property type="match status" value="1"/>
</dbReference>
<gene>
    <name evidence="1" type="primary">thiI</name>
    <name type="ordered locus">UUR10_0463</name>
</gene>
<feature type="chain" id="PRO_1000090044" description="Probable tRNA sulfurtransferase">
    <location>
        <begin position="1"/>
        <end position="392"/>
    </location>
</feature>
<feature type="domain" description="THUMP" evidence="1">
    <location>
        <begin position="60"/>
        <end position="162"/>
    </location>
</feature>
<feature type="binding site" evidence="1">
    <location>
        <begin position="180"/>
        <end position="181"/>
    </location>
    <ligand>
        <name>ATP</name>
        <dbReference type="ChEBI" id="CHEBI:30616"/>
    </ligand>
</feature>
<feature type="binding site" evidence="1">
    <location>
        <begin position="205"/>
        <end position="206"/>
    </location>
    <ligand>
        <name>ATP</name>
        <dbReference type="ChEBI" id="CHEBI:30616"/>
    </ligand>
</feature>
<feature type="binding site" evidence="1">
    <location>
        <position position="264"/>
    </location>
    <ligand>
        <name>ATP</name>
        <dbReference type="ChEBI" id="CHEBI:30616"/>
    </ligand>
</feature>
<feature type="binding site" evidence="1">
    <location>
        <position position="286"/>
    </location>
    <ligand>
        <name>ATP</name>
        <dbReference type="ChEBI" id="CHEBI:30616"/>
    </ligand>
</feature>
<feature type="binding site" evidence="1">
    <location>
        <position position="295"/>
    </location>
    <ligand>
        <name>ATP</name>
        <dbReference type="ChEBI" id="CHEBI:30616"/>
    </ligand>
</feature>
<comment type="function">
    <text evidence="1">Catalyzes the ATP-dependent transfer of a sulfur to tRNA to produce 4-thiouridine in position 8 of tRNAs, which functions as a near-UV photosensor. Also catalyzes the transfer of sulfur to the sulfur carrier protein ThiS, forming ThiS-thiocarboxylate. This is a step in the synthesis of thiazole, in the thiamine biosynthesis pathway. The sulfur is donated as persulfide by IscS.</text>
</comment>
<comment type="catalytic activity">
    <reaction evidence="1">
        <text>[ThiI sulfur-carrier protein]-S-sulfanyl-L-cysteine + a uridine in tRNA + 2 reduced [2Fe-2S]-[ferredoxin] + ATP + H(+) = [ThiI sulfur-carrier protein]-L-cysteine + a 4-thiouridine in tRNA + 2 oxidized [2Fe-2S]-[ferredoxin] + AMP + diphosphate</text>
        <dbReference type="Rhea" id="RHEA:24176"/>
        <dbReference type="Rhea" id="RHEA-COMP:10000"/>
        <dbReference type="Rhea" id="RHEA-COMP:10001"/>
        <dbReference type="Rhea" id="RHEA-COMP:13337"/>
        <dbReference type="Rhea" id="RHEA-COMP:13338"/>
        <dbReference type="Rhea" id="RHEA-COMP:13339"/>
        <dbReference type="Rhea" id="RHEA-COMP:13340"/>
        <dbReference type="ChEBI" id="CHEBI:15378"/>
        <dbReference type="ChEBI" id="CHEBI:29950"/>
        <dbReference type="ChEBI" id="CHEBI:30616"/>
        <dbReference type="ChEBI" id="CHEBI:33019"/>
        <dbReference type="ChEBI" id="CHEBI:33737"/>
        <dbReference type="ChEBI" id="CHEBI:33738"/>
        <dbReference type="ChEBI" id="CHEBI:61963"/>
        <dbReference type="ChEBI" id="CHEBI:65315"/>
        <dbReference type="ChEBI" id="CHEBI:136798"/>
        <dbReference type="ChEBI" id="CHEBI:456215"/>
        <dbReference type="EC" id="2.8.1.4"/>
    </reaction>
</comment>
<comment type="catalytic activity">
    <reaction evidence="1">
        <text>[ThiS sulfur-carrier protein]-C-terminal Gly-Gly-AMP + S-sulfanyl-L-cysteinyl-[cysteine desulfurase] + AH2 = [ThiS sulfur-carrier protein]-C-terminal-Gly-aminoethanethioate + L-cysteinyl-[cysteine desulfurase] + A + AMP + 2 H(+)</text>
        <dbReference type="Rhea" id="RHEA:43340"/>
        <dbReference type="Rhea" id="RHEA-COMP:12157"/>
        <dbReference type="Rhea" id="RHEA-COMP:12158"/>
        <dbReference type="Rhea" id="RHEA-COMP:12910"/>
        <dbReference type="Rhea" id="RHEA-COMP:19908"/>
        <dbReference type="ChEBI" id="CHEBI:13193"/>
        <dbReference type="ChEBI" id="CHEBI:15378"/>
        <dbReference type="ChEBI" id="CHEBI:17499"/>
        <dbReference type="ChEBI" id="CHEBI:29950"/>
        <dbReference type="ChEBI" id="CHEBI:61963"/>
        <dbReference type="ChEBI" id="CHEBI:90618"/>
        <dbReference type="ChEBI" id="CHEBI:232372"/>
        <dbReference type="ChEBI" id="CHEBI:456215"/>
    </reaction>
</comment>
<comment type="pathway">
    <text evidence="1">Cofactor biosynthesis; thiamine diphosphate biosynthesis.</text>
</comment>
<comment type="subcellular location">
    <subcellularLocation>
        <location evidence="1">Cytoplasm</location>
    </subcellularLocation>
</comment>
<comment type="similarity">
    <text evidence="1">Belongs to the ThiI family.</text>
</comment>
<accession>B5ZBR5</accession>
<organism>
    <name type="scientific">Ureaplasma urealyticum serovar 10 (strain ATCC 33699 / Western)</name>
    <dbReference type="NCBI Taxonomy" id="565575"/>
    <lineage>
        <taxon>Bacteria</taxon>
        <taxon>Bacillati</taxon>
        <taxon>Mycoplasmatota</taxon>
        <taxon>Mycoplasmoidales</taxon>
        <taxon>Mycoplasmoidaceae</taxon>
        <taxon>Ureaplasma</taxon>
    </lineage>
</organism>
<name>THII_UREU1</name>
<reference key="1">
    <citation type="submission" date="2008-10" db="EMBL/GenBank/DDBJ databases">
        <title>Genome sequence of Ureaplasma urealyticum serovar 10 ATCC-33699.</title>
        <authorList>
            <person name="Shrivastava S."/>
            <person name="Methe B.A."/>
            <person name="Glass J."/>
            <person name="White K."/>
            <person name="Duffy L.B."/>
        </authorList>
    </citation>
    <scope>NUCLEOTIDE SEQUENCE [LARGE SCALE GENOMIC DNA]</scope>
    <source>
        <strain>ATCC 33699 / Western</strain>
    </source>
</reference>